<comment type="function">
    <text evidence="1">The RuvA-RuvB-RuvC complex processes Holliday junction (HJ) DNA during genetic recombination and DNA repair, while the RuvA-RuvB complex plays an important role in the rescue of blocked DNA replication forks via replication fork reversal (RFR). RuvA specifically binds to HJ cruciform DNA, conferring on it an open structure. The RuvB hexamer acts as an ATP-dependent pump, pulling dsDNA into and through the RuvAB complex. HJ branch migration allows RuvC to scan DNA until it finds its consensus sequence, where it cleaves and resolves the cruciform DNA.</text>
</comment>
<comment type="subunit">
    <text evidence="1">Homotetramer. Forms an RuvA(8)-RuvB(12)-Holliday junction (HJ) complex. HJ DNA is sandwiched between 2 RuvA tetramers; dsDNA enters through RuvA and exits via RuvB. An RuvB hexamer assembles on each DNA strand where it exits the tetramer. Each RuvB hexamer is contacted by two RuvA subunits (via domain III) on 2 adjacent RuvB subunits; this complex drives branch migration. In the full resolvosome a probable DNA-RuvA(4)-RuvB(12)-RuvC(2) complex forms which resolves the HJ.</text>
</comment>
<comment type="subcellular location">
    <subcellularLocation>
        <location evidence="1">Cytoplasm</location>
    </subcellularLocation>
</comment>
<comment type="domain">
    <text evidence="1">Has three domains with a flexible linker between the domains II and III and assumes an 'L' shape. Domain III is highly mobile and contacts RuvB.</text>
</comment>
<comment type="similarity">
    <text evidence="1">Belongs to the RuvA family.</text>
</comment>
<protein>
    <recommendedName>
        <fullName evidence="1">Holliday junction branch migration complex subunit RuvA</fullName>
    </recommendedName>
</protein>
<accession>Q98F75</accession>
<proteinExistence type="inferred from homology"/>
<sequence length="206" mass="21588">MIGKLKGTLDEIDEDHCLVDIHGVGYVAYCSARTLAALPSPGEAVVLFIETYVREDMLRLYGFQSALEREWFRLLLNNVPGVGAKVALAILSTLAPADLANAIALRDIAMVSRAPGVGKKVAERIVTELKNKAPAYAGAASGTIGLKQELGEGVAPAPITDAVSALVNLGYSRDTAANAVAAALKTAGEDADASKLIRFGLKELAR</sequence>
<organism>
    <name type="scientific">Mesorhizobium japonicum (strain LMG 29417 / CECT 9101 / MAFF 303099)</name>
    <name type="common">Mesorhizobium loti (strain MAFF 303099)</name>
    <dbReference type="NCBI Taxonomy" id="266835"/>
    <lineage>
        <taxon>Bacteria</taxon>
        <taxon>Pseudomonadati</taxon>
        <taxon>Pseudomonadota</taxon>
        <taxon>Alphaproteobacteria</taxon>
        <taxon>Hyphomicrobiales</taxon>
        <taxon>Phyllobacteriaceae</taxon>
        <taxon>Mesorhizobium</taxon>
    </lineage>
</organism>
<name>RUVA_RHILO</name>
<dbReference type="EMBL" id="BA000012">
    <property type="protein sequence ID" value="BAB50692.1"/>
    <property type="molecule type" value="Genomic_DNA"/>
</dbReference>
<dbReference type="RefSeq" id="WP_010912035.1">
    <property type="nucleotide sequence ID" value="NC_002678.2"/>
</dbReference>
<dbReference type="SMR" id="Q98F75"/>
<dbReference type="GeneID" id="66681528"/>
<dbReference type="KEGG" id="mlo:mll3898"/>
<dbReference type="eggNOG" id="COG0632">
    <property type="taxonomic scope" value="Bacteria"/>
</dbReference>
<dbReference type="HOGENOM" id="CLU_087936_3_0_5"/>
<dbReference type="Proteomes" id="UP000000552">
    <property type="component" value="Chromosome"/>
</dbReference>
<dbReference type="GO" id="GO:0005737">
    <property type="term" value="C:cytoplasm"/>
    <property type="evidence" value="ECO:0007669"/>
    <property type="project" value="UniProtKB-SubCell"/>
</dbReference>
<dbReference type="GO" id="GO:0009379">
    <property type="term" value="C:Holliday junction helicase complex"/>
    <property type="evidence" value="ECO:0007669"/>
    <property type="project" value="InterPro"/>
</dbReference>
<dbReference type="GO" id="GO:0048476">
    <property type="term" value="C:Holliday junction resolvase complex"/>
    <property type="evidence" value="ECO:0007669"/>
    <property type="project" value="UniProtKB-UniRule"/>
</dbReference>
<dbReference type="GO" id="GO:0005524">
    <property type="term" value="F:ATP binding"/>
    <property type="evidence" value="ECO:0007669"/>
    <property type="project" value="InterPro"/>
</dbReference>
<dbReference type="GO" id="GO:0000400">
    <property type="term" value="F:four-way junction DNA binding"/>
    <property type="evidence" value="ECO:0007669"/>
    <property type="project" value="UniProtKB-UniRule"/>
</dbReference>
<dbReference type="GO" id="GO:0009378">
    <property type="term" value="F:four-way junction helicase activity"/>
    <property type="evidence" value="ECO:0007669"/>
    <property type="project" value="InterPro"/>
</dbReference>
<dbReference type="GO" id="GO:0006310">
    <property type="term" value="P:DNA recombination"/>
    <property type="evidence" value="ECO:0007669"/>
    <property type="project" value="UniProtKB-UniRule"/>
</dbReference>
<dbReference type="GO" id="GO:0006281">
    <property type="term" value="P:DNA repair"/>
    <property type="evidence" value="ECO:0007669"/>
    <property type="project" value="UniProtKB-UniRule"/>
</dbReference>
<dbReference type="Gene3D" id="1.10.150.20">
    <property type="entry name" value="5' to 3' exonuclease, C-terminal subdomain"/>
    <property type="match status" value="1"/>
</dbReference>
<dbReference type="Gene3D" id="1.10.8.10">
    <property type="entry name" value="DNA helicase RuvA subunit, C-terminal domain"/>
    <property type="match status" value="1"/>
</dbReference>
<dbReference type="Gene3D" id="2.40.50.140">
    <property type="entry name" value="Nucleic acid-binding proteins"/>
    <property type="match status" value="1"/>
</dbReference>
<dbReference type="HAMAP" id="MF_00031">
    <property type="entry name" value="DNA_HJ_migration_RuvA"/>
    <property type="match status" value="1"/>
</dbReference>
<dbReference type="InterPro" id="IPR013849">
    <property type="entry name" value="DNA_helicase_Holl-junc_RuvA_I"/>
</dbReference>
<dbReference type="InterPro" id="IPR012340">
    <property type="entry name" value="NA-bd_OB-fold"/>
</dbReference>
<dbReference type="InterPro" id="IPR000085">
    <property type="entry name" value="RuvA"/>
</dbReference>
<dbReference type="InterPro" id="IPR010994">
    <property type="entry name" value="RuvA_2-like"/>
</dbReference>
<dbReference type="InterPro" id="IPR011114">
    <property type="entry name" value="RuvA_C"/>
</dbReference>
<dbReference type="InterPro" id="IPR036267">
    <property type="entry name" value="RuvA_C_sf"/>
</dbReference>
<dbReference type="NCBIfam" id="TIGR00084">
    <property type="entry name" value="ruvA"/>
    <property type="match status" value="1"/>
</dbReference>
<dbReference type="Pfam" id="PF14520">
    <property type="entry name" value="HHH_5"/>
    <property type="match status" value="1"/>
</dbReference>
<dbReference type="Pfam" id="PF07499">
    <property type="entry name" value="RuvA_C"/>
    <property type="match status" value="1"/>
</dbReference>
<dbReference type="Pfam" id="PF01330">
    <property type="entry name" value="RuvA_N"/>
    <property type="match status" value="1"/>
</dbReference>
<dbReference type="SUPFAM" id="SSF46929">
    <property type="entry name" value="DNA helicase RuvA subunit, C-terminal domain"/>
    <property type="match status" value="1"/>
</dbReference>
<dbReference type="SUPFAM" id="SSF50249">
    <property type="entry name" value="Nucleic acid-binding proteins"/>
    <property type="match status" value="1"/>
</dbReference>
<dbReference type="SUPFAM" id="SSF47781">
    <property type="entry name" value="RuvA domain 2-like"/>
    <property type="match status" value="1"/>
</dbReference>
<keyword id="KW-0963">Cytoplasm</keyword>
<keyword id="KW-0227">DNA damage</keyword>
<keyword id="KW-0233">DNA recombination</keyword>
<keyword id="KW-0234">DNA repair</keyword>
<keyword id="KW-0238">DNA-binding</keyword>
<reference key="1">
    <citation type="journal article" date="2000" name="DNA Res.">
        <title>Complete genome structure of the nitrogen-fixing symbiotic bacterium Mesorhizobium loti.</title>
        <authorList>
            <person name="Kaneko T."/>
            <person name="Nakamura Y."/>
            <person name="Sato S."/>
            <person name="Asamizu E."/>
            <person name="Kato T."/>
            <person name="Sasamoto S."/>
            <person name="Watanabe A."/>
            <person name="Idesawa K."/>
            <person name="Ishikawa A."/>
            <person name="Kawashima K."/>
            <person name="Kimura T."/>
            <person name="Kishida Y."/>
            <person name="Kiyokawa C."/>
            <person name="Kohara M."/>
            <person name="Matsumoto M."/>
            <person name="Matsuno A."/>
            <person name="Mochizuki Y."/>
            <person name="Nakayama S."/>
            <person name="Nakazaki N."/>
            <person name="Shimpo S."/>
            <person name="Sugimoto M."/>
            <person name="Takeuchi C."/>
            <person name="Yamada M."/>
            <person name="Tabata S."/>
        </authorList>
    </citation>
    <scope>NUCLEOTIDE SEQUENCE [LARGE SCALE GENOMIC DNA]</scope>
    <source>
        <strain>LMG 29417 / CECT 9101 / MAFF 303099</strain>
    </source>
</reference>
<feature type="chain" id="PRO_0000094670" description="Holliday junction branch migration complex subunit RuvA">
    <location>
        <begin position="1"/>
        <end position="206"/>
    </location>
</feature>
<feature type="region of interest" description="Domain I" evidence="1">
    <location>
        <begin position="1"/>
        <end position="64"/>
    </location>
</feature>
<feature type="region of interest" description="Domain II" evidence="1">
    <location>
        <begin position="65"/>
        <end position="144"/>
    </location>
</feature>
<feature type="region of interest" description="Flexible linker" evidence="1">
    <location>
        <begin position="145"/>
        <end position="154"/>
    </location>
</feature>
<feature type="region of interest" description="Domain III" evidence="1">
    <location>
        <begin position="154"/>
        <end position="206"/>
    </location>
</feature>
<gene>
    <name evidence="1" type="primary">ruvA</name>
    <name type="ordered locus">mll3898</name>
</gene>
<evidence type="ECO:0000255" key="1">
    <source>
        <dbReference type="HAMAP-Rule" id="MF_00031"/>
    </source>
</evidence>